<proteinExistence type="inferred from homology"/>
<reference key="1">
    <citation type="journal article" date="2002" name="Proc. Natl. Acad. Sci. U.S.A.">
        <title>Extensive mosaic structure revealed by the complete genome sequence of uropathogenic Escherichia coli.</title>
        <authorList>
            <person name="Welch R.A."/>
            <person name="Burland V."/>
            <person name="Plunkett G. III"/>
            <person name="Redford P."/>
            <person name="Roesch P."/>
            <person name="Rasko D."/>
            <person name="Buckles E.L."/>
            <person name="Liou S.-R."/>
            <person name="Boutin A."/>
            <person name="Hackett J."/>
            <person name="Stroud D."/>
            <person name="Mayhew G.F."/>
            <person name="Rose D.J."/>
            <person name="Zhou S."/>
            <person name="Schwartz D.C."/>
            <person name="Perna N.T."/>
            <person name="Mobley H.L.T."/>
            <person name="Donnenberg M.S."/>
            <person name="Blattner F.R."/>
        </authorList>
    </citation>
    <scope>NUCLEOTIDE SEQUENCE [LARGE SCALE GENOMIC DNA]</scope>
    <source>
        <strain>CFT073 / ATCC 700928 / UPEC</strain>
    </source>
</reference>
<comment type="function">
    <text evidence="1">Catalyzes the transfer of an acyl group from acyl-ACP to glycerol-3-phosphate (G3P) to form lysophosphatidic acid (LPA). This enzyme can also utilize acyl-CoA as fatty acyl donor, but not acyl-PO(4).</text>
</comment>
<comment type="catalytic activity">
    <reaction evidence="1">
        <text>sn-glycerol 3-phosphate + an acyl-CoA = a 1-acyl-sn-glycero-3-phosphate + CoA</text>
        <dbReference type="Rhea" id="RHEA:15325"/>
        <dbReference type="ChEBI" id="CHEBI:57287"/>
        <dbReference type="ChEBI" id="CHEBI:57597"/>
        <dbReference type="ChEBI" id="CHEBI:57970"/>
        <dbReference type="ChEBI" id="CHEBI:58342"/>
        <dbReference type="EC" id="2.3.1.15"/>
    </reaction>
</comment>
<comment type="catalytic activity">
    <reaction evidence="1">
        <text>a fatty acyl-[ACP] + sn-glycerol 3-phosphate = a 1-acyl-sn-glycero-3-phosphate + holo-[ACP]</text>
        <dbReference type="Rhea" id="RHEA:42300"/>
        <dbReference type="Rhea" id="RHEA-COMP:9685"/>
        <dbReference type="Rhea" id="RHEA-COMP:14125"/>
        <dbReference type="ChEBI" id="CHEBI:57597"/>
        <dbReference type="ChEBI" id="CHEBI:57970"/>
        <dbReference type="ChEBI" id="CHEBI:64479"/>
        <dbReference type="ChEBI" id="CHEBI:138651"/>
        <dbReference type="EC" id="2.3.1.n5"/>
    </reaction>
</comment>
<comment type="pathway">
    <text evidence="1">Lipid metabolism; phospholipid metabolism.</text>
</comment>
<comment type="subunit">
    <text evidence="1">Probably interacts with PlsX.</text>
</comment>
<comment type="subcellular location">
    <subcellularLocation>
        <location evidence="1">Cell inner membrane</location>
        <topology evidence="1">Multi-pass membrane protein</topology>
    </subcellularLocation>
</comment>
<comment type="similarity">
    <text evidence="1">Belongs to the PlsY family.</text>
</comment>
<keyword id="KW-0997">Cell inner membrane</keyword>
<keyword id="KW-1003">Cell membrane</keyword>
<keyword id="KW-0444">Lipid biosynthesis</keyword>
<keyword id="KW-0443">Lipid metabolism</keyword>
<keyword id="KW-0472">Membrane</keyword>
<keyword id="KW-0594">Phospholipid biosynthesis</keyword>
<keyword id="KW-1208">Phospholipid metabolism</keyword>
<keyword id="KW-1185">Reference proteome</keyword>
<keyword id="KW-0808">Transferase</keyword>
<keyword id="KW-0812">Transmembrane</keyword>
<keyword id="KW-1133">Transmembrane helix</keyword>
<name>PLSY_ECOL6</name>
<organism>
    <name type="scientific">Escherichia coli O6:H1 (strain CFT073 / ATCC 700928 / UPEC)</name>
    <dbReference type="NCBI Taxonomy" id="199310"/>
    <lineage>
        <taxon>Bacteria</taxon>
        <taxon>Pseudomonadati</taxon>
        <taxon>Pseudomonadota</taxon>
        <taxon>Gammaproteobacteria</taxon>
        <taxon>Enterobacterales</taxon>
        <taxon>Enterobacteriaceae</taxon>
        <taxon>Escherichia</taxon>
    </lineage>
</organism>
<accession>P60783</accession>
<accession>P31056</accession>
<dbReference type="EC" id="2.3.1.15" evidence="1"/>
<dbReference type="EC" id="2.3.1.n5" evidence="1"/>
<dbReference type="EMBL" id="AE014075">
    <property type="protein sequence ID" value="AAN82254.1"/>
    <property type="molecule type" value="Genomic_DNA"/>
</dbReference>
<dbReference type="RefSeq" id="WP_001272796.1">
    <property type="nucleotide sequence ID" value="NZ_CP051263.1"/>
</dbReference>
<dbReference type="SMR" id="P60783"/>
<dbReference type="STRING" id="199310.c3809"/>
<dbReference type="GeneID" id="93778934"/>
<dbReference type="KEGG" id="ecc:c3809"/>
<dbReference type="eggNOG" id="COG0344">
    <property type="taxonomic scope" value="Bacteria"/>
</dbReference>
<dbReference type="HOGENOM" id="CLU_081254_0_2_6"/>
<dbReference type="BioCyc" id="ECOL199310:C3809-MONOMER"/>
<dbReference type="UniPathway" id="UPA00085"/>
<dbReference type="Proteomes" id="UP000001410">
    <property type="component" value="Chromosome"/>
</dbReference>
<dbReference type="GO" id="GO:0005886">
    <property type="term" value="C:plasma membrane"/>
    <property type="evidence" value="ECO:0007669"/>
    <property type="project" value="UniProtKB-SubCell"/>
</dbReference>
<dbReference type="GO" id="GO:0043772">
    <property type="term" value="F:acyl-phosphate glycerol-3-phosphate acyltransferase activity"/>
    <property type="evidence" value="ECO:0007669"/>
    <property type="project" value="InterPro"/>
</dbReference>
<dbReference type="GO" id="GO:0004366">
    <property type="term" value="F:glycerol-3-phosphate O-acyltransferase activity"/>
    <property type="evidence" value="ECO:0007669"/>
    <property type="project" value="UniProtKB-UniRule"/>
</dbReference>
<dbReference type="GO" id="GO:0008654">
    <property type="term" value="P:phospholipid biosynthetic process"/>
    <property type="evidence" value="ECO:0007669"/>
    <property type="project" value="UniProtKB-UniRule"/>
</dbReference>
<dbReference type="HAMAP" id="MF_01043">
    <property type="entry name" value="PlsY"/>
    <property type="match status" value="1"/>
</dbReference>
<dbReference type="InterPro" id="IPR003811">
    <property type="entry name" value="G3P_acylTferase_PlsY"/>
</dbReference>
<dbReference type="NCBIfam" id="TIGR00023">
    <property type="entry name" value="glycerol-3-phosphate 1-O-acyltransferase PlsY"/>
    <property type="match status" value="1"/>
</dbReference>
<dbReference type="PANTHER" id="PTHR30309:SF0">
    <property type="entry name" value="GLYCEROL-3-PHOSPHATE ACYLTRANSFERASE-RELATED"/>
    <property type="match status" value="1"/>
</dbReference>
<dbReference type="PANTHER" id="PTHR30309">
    <property type="entry name" value="INNER MEMBRANE PROTEIN YGIH"/>
    <property type="match status" value="1"/>
</dbReference>
<dbReference type="Pfam" id="PF02660">
    <property type="entry name" value="G3P_acyltransf"/>
    <property type="match status" value="1"/>
</dbReference>
<dbReference type="SMART" id="SM01207">
    <property type="entry name" value="G3P_acyltransf"/>
    <property type="match status" value="1"/>
</dbReference>
<feature type="chain" id="PRO_0000188370" description="Glycerol-3-phosphate acyltransferase">
    <location>
        <begin position="1"/>
        <end position="205"/>
    </location>
</feature>
<feature type="topological domain" description="Periplasmic" evidence="1">
    <location>
        <begin position="1"/>
        <end position="3"/>
    </location>
</feature>
<feature type="transmembrane region" description="Helical" evidence="1">
    <location>
        <begin position="4"/>
        <end position="24"/>
    </location>
</feature>
<feature type="topological domain" description="Cytoplasmic" evidence="1">
    <location>
        <begin position="25"/>
        <end position="52"/>
    </location>
</feature>
<feature type="transmembrane region" description="Helical" evidence="1">
    <location>
        <begin position="53"/>
        <end position="73"/>
    </location>
</feature>
<feature type="topological domain" description="Periplasmic" evidence="1">
    <location>
        <begin position="74"/>
        <end position="80"/>
    </location>
</feature>
<feature type="transmembrane region" description="Helical" evidence="1">
    <location>
        <begin position="81"/>
        <end position="101"/>
    </location>
</feature>
<feature type="topological domain" description="Cytoplasmic" evidence="1">
    <location>
        <begin position="102"/>
        <end position="111"/>
    </location>
</feature>
<feature type="transmembrane region" description="Helical" evidence="1">
    <location>
        <begin position="112"/>
        <end position="132"/>
    </location>
</feature>
<feature type="topological domain" description="Periplasmic" evidence="1">
    <location>
        <begin position="133"/>
        <end position="137"/>
    </location>
</feature>
<feature type="transmembrane region" description="Helical" evidence="1">
    <location>
        <begin position="138"/>
        <end position="158"/>
    </location>
</feature>
<feature type="topological domain" description="Cytoplasmic" evidence="1">
    <location>
        <begin position="159"/>
        <end position="205"/>
    </location>
</feature>
<sequence length="205" mass="22193">MSAIAPGMILIAYLCGSISSAILVCRLCGLPDPRTSGSGNPGATNVLRIGGKGAAVAVLIFDVLKGMLPVWGAYELGVSPFWLGLIAIAACLGHIWPVFFGFKGGKGVATAFGAIAPIGWDLTGVMAGTWLLTVLLSGYSSLGAIVSALIAPFYVWWFKPQFTFPVSMLSCLILLRHHDNIQRLWRRQETKIWTKFKRKREKDPE</sequence>
<gene>
    <name evidence="1" type="primary">plsY</name>
    <name type="synonym">ygiH</name>
    <name type="ordered locus">c3809</name>
</gene>
<evidence type="ECO:0000255" key="1">
    <source>
        <dbReference type="HAMAP-Rule" id="MF_01043"/>
    </source>
</evidence>
<protein>
    <recommendedName>
        <fullName evidence="1">Glycerol-3-phosphate acyltransferase</fullName>
    </recommendedName>
    <alternativeName>
        <fullName evidence="1">G3P acyltransferase</fullName>
        <shortName evidence="1">GPAT</shortName>
        <ecNumber evidence="1">2.3.1.15</ecNumber>
        <ecNumber evidence="1">2.3.1.n5</ecNumber>
    </alternativeName>
    <alternativeName>
        <fullName evidence="1">Lysophosphatidic acid synthase</fullName>
        <shortName evidence="1">LPA synthase</shortName>
    </alternativeName>
</protein>